<reference key="1">
    <citation type="journal article" date="2005" name="PLoS Biol.">
        <title>The genome sequence of Rickettsia felis identifies the first putative conjugative plasmid in an obligate intracellular parasite.</title>
        <authorList>
            <person name="Ogata H."/>
            <person name="Renesto P."/>
            <person name="Audic S."/>
            <person name="Robert C."/>
            <person name="Blanc G."/>
            <person name="Fournier P.-E."/>
            <person name="Parinello H."/>
            <person name="Claverie J.-M."/>
            <person name="Raoult D."/>
        </authorList>
    </citation>
    <scope>NUCLEOTIDE SEQUENCE [LARGE SCALE GENOMIC DNA]</scope>
    <source>
        <strain>ATCC VR-1525 / URRWXCal2</strain>
    </source>
</reference>
<name>YIDC_RICFE</name>
<proteinExistence type="inferred from homology"/>
<dbReference type="EMBL" id="CP000053">
    <property type="protein sequence ID" value="AAY60982.1"/>
    <property type="molecule type" value="Genomic_DNA"/>
</dbReference>
<dbReference type="SMR" id="Q4UN76"/>
<dbReference type="STRING" id="315456.RF_0131"/>
<dbReference type="KEGG" id="rfe:RF_0131"/>
<dbReference type="eggNOG" id="COG0706">
    <property type="taxonomic scope" value="Bacteria"/>
</dbReference>
<dbReference type="HOGENOM" id="CLU_016535_1_0_5"/>
<dbReference type="OrthoDB" id="9780552at2"/>
<dbReference type="Proteomes" id="UP000008548">
    <property type="component" value="Chromosome"/>
</dbReference>
<dbReference type="GO" id="GO:0005886">
    <property type="term" value="C:plasma membrane"/>
    <property type="evidence" value="ECO:0007669"/>
    <property type="project" value="UniProtKB-SubCell"/>
</dbReference>
<dbReference type="GO" id="GO:0032977">
    <property type="term" value="F:membrane insertase activity"/>
    <property type="evidence" value="ECO:0007669"/>
    <property type="project" value="InterPro"/>
</dbReference>
<dbReference type="GO" id="GO:0051205">
    <property type="term" value="P:protein insertion into membrane"/>
    <property type="evidence" value="ECO:0007669"/>
    <property type="project" value="TreeGrafter"/>
</dbReference>
<dbReference type="GO" id="GO:0015031">
    <property type="term" value="P:protein transport"/>
    <property type="evidence" value="ECO:0007669"/>
    <property type="project" value="UniProtKB-KW"/>
</dbReference>
<dbReference type="CDD" id="cd20070">
    <property type="entry name" value="5TM_YidC_Alb3"/>
    <property type="match status" value="1"/>
</dbReference>
<dbReference type="CDD" id="cd19961">
    <property type="entry name" value="EcYidC-like_peri"/>
    <property type="match status" value="1"/>
</dbReference>
<dbReference type="Gene3D" id="2.70.98.90">
    <property type="match status" value="1"/>
</dbReference>
<dbReference type="HAMAP" id="MF_01810">
    <property type="entry name" value="YidC_type1"/>
    <property type="match status" value="1"/>
</dbReference>
<dbReference type="InterPro" id="IPR019998">
    <property type="entry name" value="Membr_insert_YidC"/>
</dbReference>
<dbReference type="InterPro" id="IPR028053">
    <property type="entry name" value="Membr_insert_YidC_N"/>
</dbReference>
<dbReference type="InterPro" id="IPR001708">
    <property type="entry name" value="YidC/ALB3/OXA1/COX18"/>
</dbReference>
<dbReference type="InterPro" id="IPR028055">
    <property type="entry name" value="YidC/Oxa/ALB_C"/>
</dbReference>
<dbReference type="InterPro" id="IPR047196">
    <property type="entry name" value="YidC_ALB_C"/>
</dbReference>
<dbReference type="InterPro" id="IPR038221">
    <property type="entry name" value="YidC_periplasmic_sf"/>
</dbReference>
<dbReference type="NCBIfam" id="NF002353">
    <property type="entry name" value="PRK01318.1-4"/>
    <property type="match status" value="1"/>
</dbReference>
<dbReference type="NCBIfam" id="TIGR03593">
    <property type="entry name" value="yidC_nterm"/>
    <property type="match status" value="1"/>
</dbReference>
<dbReference type="NCBIfam" id="TIGR03592">
    <property type="entry name" value="yidC_oxa1_cterm"/>
    <property type="match status" value="1"/>
</dbReference>
<dbReference type="PANTHER" id="PTHR12428:SF65">
    <property type="entry name" value="CYTOCHROME C OXIDASE ASSEMBLY PROTEIN COX18, MITOCHONDRIAL"/>
    <property type="match status" value="1"/>
</dbReference>
<dbReference type="PANTHER" id="PTHR12428">
    <property type="entry name" value="OXA1"/>
    <property type="match status" value="1"/>
</dbReference>
<dbReference type="Pfam" id="PF02096">
    <property type="entry name" value="60KD_IMP"/>
    <property type="match status" value="1"/>
</dbReference>
<dbReference type="Pfam" id="PF14849">
    <property type="entry name" value="YidC_periplas"/>
    <property type="match status" value="1"/>
</dbReference>
<dbReference type="PRINTS" id="PR00701">
    <property type="entry name" value="60KDINNERMP"/>
</dbReference>
<dbReference type="PRINTS" id="PR01900">
    <property type="entry name" value="YIDCPROTEIN"/>
</dbReference>
<accession>Q4UN76</accession>
<evidence type="ECO:0000255" key="1">
    <source>
        <dbReference type="HAMAP-Rule" id="MF_01810"/>
    </source>
</evidence>
<gene>
    <name evidence="1" type="primary">yidC</name>
    <name type="ordered locus">RF_0131</name>
</gene>
<sequence>MNNNIINLIAAIILSLSIIFGWQYFVVKPEQKKQQQQIAVQKAENLKKQQLKALVEPATDIVVQEESGVQRIKIESESLTGSISLKGLRFDDLILKKYKQDLSNNSPEVRLFSPANTENAYFAEIGLVSNLSSVKLPNNDTIWNSDSEILSPEKPVNLFWVNEDGVKFLVTITVDENYLFTIEQTIVNNSDKELPIQSYGLINRKYTAVEKAVNILHQGPIGCIDENLKEYSYDDIKDKKSEKFAASKVDWIGITDKYWLSSLIPDKSSNYSSNFNYALKQGTERYQVDFISPVQIIKPGENFSIKSRIFAGAKKVDLLDKYEKQYDIKLFDRAIDFGWFYIITKPVFYAMNFFYGYVGNFGVSILIVTVIIKLLMFTLANKSYRSMKKMKNLQPEIDRIKNLYSDDKARLNQEIMALYKKEKVNPVAGCLPILVQIPLFFSIYKVLYVTIEMRQVPFYGWIKDLSAPDPTTIFNLFGLLPFSPPSFLMIGAWPILMAITMFLQQKMSPEPADPMQAQVMKFMPLIFLFMFSSFPVGLLIYWSWNNILSIIQQYYINKFN</sequence>
<keyword id="KW-0997">Cell inner membrane</keyword>
<keyword id="KW-1003">Cell membrane</keyword>
<keyword id="KW-0143">Chaperone</keyword>
<keyword id="KW-0472">Membrane</keyword>
<keyword id="KW-0653">Protein transport</keyword>
<keyword id="KW-0812">Transmembrane</keyword>
<keyword id="KW-1133">Transmembrane helix</keyword>
<keyword id="KW-0813">Transport</keyword>
<organism>
    <name type="scientific">Rickettsia felis (strain ATCC VR-1525 / URRWXCal2)</name>
    <name type="common">Rickettsia azadi</name>
    <dbReference type="NCBI Taxonomy" id="315456"/>
    <lineage>
        <taxon>Bacteria</taxon>
        <taxon>Pseudomonadati</taxon>
        <taxon>Pseudomonadota</taxon>
        <taxon>Alphaproteobacteria</taxon>
        <taxon>Rickettsiales</taxon>
        <taxon>Rickettsiaceae</taxon>
        <taxon>Rickettsieae</taxon>
        <taxon>Rickettsia</taxon>
        <taxon>spotted fever group</taxon>
    </lineage>
</organism>
<feature type="chain" id="PRO_0000272371" description="Membrane protein insertase YidC">
    <location>
        <begin position="1"/>
        <end position="560"/>
    </location>
</feature>
<feature type="transmembrane region" description="Helical" evidence="1">
    <location>
        <begin position="5"/>
        <end position="25"/>
    </location>
</feature>
<feature type="transmembrane region" description="Helical" evidence="1">
    <location>
        <begin position="334"/>
        <end position="354"/>
    </location>
</feature>
<feature type="transmembrane region" description="Helical" evidence="1">
    <location>
        <begin position="357"/>
        <end position="377"/>
    </location>
</feature>
<feature type="transmembrane region" description="Helical" evidence="1">
    <location>
        <begin position="431"/>
        <end position="451"/>
    </location>
</feature>
<feature type="transmembrane region" description="Helical" evidence="1">
    <location>
        <begin position="476"/>
        <end position="496"/>
    </location>
</feature>
<feature type="transmembrane region" description="Helical" evidence="1">
    <location>
        <begin position="522"/>
        <end position="542"/>
    </location>
</feature>
<protein>
    <recommendedName>
        <fullName evidence="1">Membrane protein insertase YidC</fullName>
    </recommendedName>
    <alternativeName>
        <fullName evidence="1">Foldase YidC</fullName>
    </alternativeName>
    <alternativeName>
        <fullName evidence="1">Membrane integrase YidC</fullName>
    </alternativeName>
    <alternativeName>
        <fullName evidence="1">Membrane protein YidC</fullName>
    </alternativeName>
</protein>
<comment type="function">
    <text evidence="1">Required for the insertion and/or proper folding and/or complex formation of integral membrane proteins into the membrane. Involved in integration of membrane proteins that insert both dependently and independently of the Sec translocase complex, as well as at least some lipoproteins. Aids folding of multispanning membrane proteins.</text>
</comment>
<comment type="subunit">
    <text evidence="1">Interacts with the Sec translocase complex via SecD. Specifically interacts with transmembrane segments of nascent integral membrane proteins during membrane integration.</text>
</comment>
<comment type="subcellular location">
    <subcellularLocation>
        <location evidence="1">Cell inner membrane</location>
        <topology evidence="1">Multi-pass membrane protein</topology>
    </subcellularLocation>
</comment>
<comment type="similarity">
    <text evidence="1">Belongs to the OXA1/ALB3/YidC family. Type 1 subfamily.</text>
</comment>